<protein>
    <recommendedName>
        <fullName>Serpentine receptor class delta-32</fullName>
        <shortName>Protein srd-32</shortName>
    </recommendedName>
</protein>
<organism>
    <name type="scientific">Caenorhabditis elegans</name>
    <dbReference type="NCBI Taxonomy" id="6239"/>
    <lineage>
        <taxon>Eukaryota</taxon>
        <taxon>Metazoa</taxon>
        <taxon>Ecdysozoa</taxon>
        <taxon>Nematoda</taxon>
        <taxon>Chromadorea</taxon>
        <taxon>Rhabditida</taxon>
        <taxon>Rhabditina</taxon>
        <taxon>Rhabditomorpha</taxon>
        <taxon>Rhabditoidea</taxon>
        <taxon>Rhabditidae</taxon>
        <taxon>Peloderinae</taxon>
        <taxon>Caenorhabditis</taxon>
    </lineage>
</organism>
<feature type="chain" id="PRO_0000104519" description="Serpentine receptor class delta-32">
    <location>
        <begin position="1"/>
        <end position="339"/>
    </location>
</feature>
<feature type="transmembrane region" description="Helical" evidence="1">
    <location>
        <begin position="14"/>
        <end position="34"/>
    </location>
</feature>
<feature type="transmembrane region" description="Helical" evidence="1">
    <location>
        <begin position="45"/>
        <end position="65"/>
    </location>
</feature>
<feature type="transmembrane region" description="Helical" evidence="1">
    <location>
        <begin position="94"/>
        <end position="114"/>
    </location>
</feature>
<feature type="transmembrane region" description="Helical" evidence="1">
    <location>
        <begin position="128"/>
        <end position="148"/>
    </location>
</feature>
<feature type="transmembrane region" description="Helical" evidence="1">
    <location>
        <begin position="188"/>
        <end position="208"/>
    </location>
</feature>
<feature type="transmembrane region" description="Helical" evidence="1">
    <location>
        <begin position="237"/>
        <end position="257"/>
    </location>
</feature>
<feature type="transmembrane region" description="Helical" evidence="1">
    <location>
        <begin position="269"/>
        <end position="289"/>
    </location>
</feature>
<name>SRD32_CAEEL</name>
<evidence type="ECO:0000255" key="1"/>
<evidence type="ECO:0000305" key="2"/>
<sequence length="339" mass="39255">MFVDIYDQLYISYAAVVSTLGIIFNGFLLFLIFFKSPSCLTPYTVFLANTSITQLGYCICFLLTVPRVISINLRIVNIYLGFSQFLGHWWSYMIFTTMLHFAVNSFLSIMLSMVFRCISLKTLRFPTSGAFAMCILAYMIPLSMVVSIRGIEITSNFTINSKYTLWQLENLDKYRTVVGTTMAQLSTLWVACCVSILCIPIYSVMFWCRYRILRMLERPGYMFNTTTTLQIKRLVKALTVQSLIPVFTLFPASLIFLSTQFHVIETTKFGYIIISLLSLSPTIDPLVTIYYVQPYRKYIVDLLWSEERPMVSPFLSNNDPRFYRSRSNSVLMMRNTHFV</sequence>
<gene>
    <name type="primary">srd-32</name>
    <name type="ORF">T19H12.5</name>
</gene>
<keyword id="KW-0472">Membrane</keyword>
<keyword id="KW-1185">Reference proteome</keyword>
<keyword id="KW-0812">Transmembrane</keyword>
<keyword id="KW-1133">Transmembrane helix</keyword>
<accession>O01608</accession>
<reference key="1">
    <citation type="journal article" date="1998" name="Science">
        <title>Genome sequence of the nematode C. elegans: a platform for investigating biology.</title>
        <authorList>
            <consortium name="The C. elegans sequencing consortium"/>
        </authorList>
    </citation>
    <scope>NUCLEOTIDE SEQUENCE [LARGE SCALE GENOMIC DNA]</scope>
    <source>
        <strain>Bristol N2</strain>
    </source>
</reference>
<dbReference type="EMBL" id="FO080814">
    <property type="protein sequence ID" value="CCD67001.1"/>
    <property type="molecule type" value="Genomic_DNA"/>
</dbReference>
<dbReference type="PIR" id="T34449">
    <property type="entry name" value="T34449"/>
</dbReference>
<dbReference type="RefSeq" id="NP_504303.1">
    <property type="nucleotide sequence ID" value="NM_071902.6"/>
</dbReference>
<dbReference type="SMR" id="O01608"/>
<dbReference type="FunCoup" id="O01608">
    <property type="interactions" value="1"/>
</dbReference>
<dbReference type="PaxDb" id="6239-T19H12.5"/>
<dbReference type="EnsemblMetazoa" id="T19H12.5.1">
    <property type="protein sequence ID" value="T19H12.5.1"/>
    <property type="gene ID" value="WBGene00005110"/>
</dbReference>
<dbReference type="GeneID" id="191815"/>
<dbReference type="KEGG" id="cel:CELE_T19H12.5"/>
<dbReference type="UCSC" id="T19H12.5">
    <property type="organism name" value="c. elegans"/>
</dbReference>
<dbReference type="AGR" id="WB:WBGene00005110"/>
<dbReference type="CTD" id="191815"/>
<dbReference type="WormBase" id="T19H12.5">
    <property type="protein sequence ID" value="CE25116"/>
    <property type="gene ID" value="WBGene00005110"/>
    <property type="gene designation" value="srd-32"/>
</dbReference>
<dbReference type="eggNOG" id="ENOG502TFYH">
    <property type="taxonomic scope" value="Eukaryota"/>
</dbReference>
<dbReference type="GeneTree" id="ENSGT00970000195825"/>
<dbReference type="HOGENOM" id="CLU_057924_3_0_1"/>
<dbReference type="InParanoid" id="O01608"/>
<dbReference type="OMA" id="TLWQLEN"/>
<dbReference type="OrthoDB" id="5873607at2759"/>
<dbReference type="PhylomeDB" id="O01608"/>
<dbReference type="PRO" id="PR:O01608"/>
<dbReference type="Proteomes" id="UP000001940">
    <property type="component" value="Chromosome V"/>
</dbReference>
<dbReference type="Bgee" id="WBGene00005110">
    <property type="expression patterns" value="Expressed in embryo and 3 other cell types or tissues"/>
</dbReference>
<dbReference type="GO" id="GO:0016020">
    <property type="term" value="C:membrane"/>
    <property type="evidence" value="ECO:0007669"/>
    <property type="project" value="UniProtKB-SubCell"/>
</dbReference>
<dbReference type="Gene3D" id="1.20.1070.10">
    <property type="entry name" value="Rhodopsin 7-helix transmembrane proteins"/>
    <property type="match status" value="1"/>
</dbReference>
<dbReference type="InterPro" id="IPR019421">
    <property type="entry name" value="7TM_GPCR_serpentine_rcpt_Srd"/>
</dbReference>
<dbReference type="InterPro" id="IPR050920">
    <property type="entry name" value="Nematode_rcpt-like_delta"/>
</dbReference>
<dbReference type="PANTHER" id="PTHR22945:SF16">
    <property type="entry name" value="SERPENTINE RECEPTOR CLASS DELTA-32"/>
    <property type="match status" value="1"/>
</dbReference>
<dbReference type="PANTHER" id="PTHR22945">
    <property type="entry name" value="SERPENTINE RECEPTOR, CLASS D DELTA"/>
    <property type="match status" value="1"/>
</dbReference>
<dbReference type="Pfam" id="PF10317">
    <property type="entry name" value="7TM_GPCR_Srd"/>
    <property type="match status" value="1"/>
</dbReference>
<dbReference type="SUPFAM" id="SSF81321">
    <property type="entry name" value="Family A G protein-coupled receptor-like"/>
    <property type="match status" value="1"/>
</dbReference>
<comment type="subcellular location">
    <subcellularLocation>
        <location evidence="2">Membrane</location>
        <topology evidence="2">Multi-pass membrane protein</topology>
    </subcellularLocation>
</comment>
<comment type="similarity">
    <text evidence="2">Belongs to the nematode receptor-like protein srd family.</text>
</comment>
<proteinExistence type="inferred from homology"/>